<name>FIEF_SHIB3</name>
<protein>
    <recommendedName>
        <fullName evidence="1">Cation-efflux pump FieF</fullName>
    </recommendedName>
</protein>
<keyword id="KW-0997">Cell inner membrane</keyword>
<keyword id="KW-1003">Cell membrane</keyword>
<keyword id="KW-0406">Ion transport</keyword>
<keyword id="KW-0408">Iron</keyword>
<keyword id="KW-0410">Iron transport</keyword>
<keyword id="KW-0472">Membrane</keyword>
<keyword id="KW-0479">Metal-binding</keyword>
<keyword id="KW-1185">Reference proteome</keyword>
<keyword id="KW-0812">Transmembrane</keyword>
<keyword id="KW-1133">Transmembrane helix</keyword>
<keyword id="KW-0813">Transport</keyword>
<keyword id="KW-0862">Zinc</keyword>
<keyword id="KW-0864">Zinc transport</keyword>
<comment type="function">
    <text evidence="1">Divalent metal cation transporter which exports Zn(2+), Cd(2+) and possibly Fe(2+). May be involved in zinc and iron detoxification by efflux.</text>
</comment>
<comment type="catalytic activity">
    <reaction evidence="1">
        <text>Zn(2+)(in) + H(+)(out) = Zn(2+)(out) + H(+)(in)</text>
        <dbReference type="Rhea" id="RHEA:28839"/>
        <dbReference type="ChEBI" id="CHEBI:15378"/>
        <dbReference type="ChEBI" id="CHEBI:29105"/>
    </reaction>
</comment>
<comment type="catalytic activity">
    <reaction evidence="1">
        <text>Cd(2+)(in) + H(+)(out) = Cd(2+)(out) + H(+)(in)</text>
        <dbReference type="Rhea" id="RHEA:28739"/>
        <dbReference type="ChEBI" id="CHEBI:15378"/>
        <dbReference type="ChEBI" id="CHEBI:48775"/>
    </reaction>
</comment>
<comment type="catalytic activity">
    <reaction evidence="1">
        <text>Fe(2+)(in) + H(+)(out) = Fe(2+)(out) + H(+)(in)</text>
        <dbReference type="Rhea" id="RHEA:29439"/>
        <dbReference type="ChEBI" id="CHEBI:15378"/>
        <dbReference type="ChEBI" id="CHEBI:29033"/>
    </reaction>
</comment>
<comment type="subunit">
    <text evidence="1">Homodimer.</text>
</comment>
<comment type="subcellular location">
    <subcellularLocation>
        <location evidence="1">Cell inner membrane</location>
        <topology evidence="1">Multi-pass membrane protein</topology>
    </subcellularLocation>
</comment>
<comment type="similarity">
    <text evidence="1">Belongs to the cation diffusion facilitator (CDF) transporter (TC 2.A.4) family. FieF subfamily.</text>
</comment>
<feature type="chain" id="PRO_1000145707" description="Cation-efflux pump FieF">
    <location>
        <begin position="1"/>
        <end position="300"/>
    </location>
</feature>
<feature type="transmembrane region" description="Helical" evidence="1">
    <location>
        <begin position="12"/>
        <end position="32"/>
    </location>
</feature>
<feature type="transmembrane region" description="Helical" evidence="1">
    <location>
        <begin position="39"/>
        <end position="59"/>
    </location>
</feature>
<feature type="transmembrane region" description="Helical" evidence="1">
    <location>
        <begin position="82"/>
        <end position="102"/>
    </location>
</feature>
<feature type="transmembrane region" description="Helical" evidence="1">
    <location>
        <begin position="114"/>
        <end position="134"/>
    </location>
</feature>
<feature type="transmembrane region" description="Helical" evidence="1">
    <location>
        <begin position="156"/>
        <end position="176"/>
    </location>
</feature>
<feature type="transmembrane region" description="Helical" evidence="1">
    <location>
        <begin position="178"/>
        <end position="198"/>
    </location>
</feature>
<feature type="binding site" evidence="1">
    <location>
        <position position="45"/>
    </location>
    <ligand>
        <name>Zn(2+)</name>
        <dbReference type="ChEBI" id="CHEBI:29105"/>
    </ligand>
</feature>
<feature type="binding site" evidence="1">
    <location>
        <position position="49"/>
    </location>
    <ligand>
        <name>Zn(2+)</name>
        <dbReference type="ChEBI" id="CHEBI:29105"/>
    </ligand>
</feature>
<feature type="binding site" evidence="1">
    <location>
        <position position="153"/>
    </location>
    <ligand>
        <name>Zn(2+)</name>
        <dbReference type="ChEBI" id="CHEBI:29105"/>
    </ligand>
</feature>
<feature type="binding site" evidence="1">
    <location>
        <position position="157"/>
    </location>
    <ligand>
        <name>Zn(2+)</name>
        <dbReference type="ChEBI" id="CHEBI:29105"/>
    </ligand>
</feature>
<dbReference type="EMBL" id="CP001063">
    <property type="protein sequence ID" value="ACD09425.1"/>
    <property type="molecule type" value="Genomic_DNA"/>
</dbReference>
<dbReference type="RefSeq" id="WP_001076735.1">
    <property type="nucleotide sequence ID" value="NC_010658.1"/>
</dbReference>
<dbReference type="SMR" id="B2TVQ7"/>
<dbReference type="STRING" id="344609.SbBS512_E4394"/>
<dbReference type="KEGG" id="sbc:SbBS512_E4394"/>
<dbReference type="HOGENOM" id="CLU_013430_3_0_6"/>
<dbReference type="Proteomes" id="UP000001030">
    <property type="component" value="Chromosome"/>
</dbReference>
<dbReference type="GO" id="GO:0005886">
    <property type="term" value="C:plasma membrane"/>
    <property type="evidence" value="ECO:0007669"/>
    <property type="project" value="UniProtKB-SubCell"/>
</dbReference>
<dbReference type="GO" id="GO:0015086">
    <property type="term" value="F:cadmium ion transmembrane transporter activity"/>
    <property type="evidence" value="ECO:0007669"/>
    <property type="project" value="UniProtKB-UniRule"/>
</dbReference>
<dbReference type="GO" id="GO:0015093">
    <property type="term" value="F:ferrous iron transmembrane transporter activity"/>
    <property type="evidence" value="ECO:0007669"/>
    <property type="project" value="TreeGrafter"/>
</dbReference>
<dbReference type="GO" id="GO:0046872">
    <property type="term" value="F:metal ion binding"/>
    <property type="evidence" value="ECO:0007669"/>
    <property type="project" value="UniProtKB-KW"/>
</dbReference>
<dbReference type="GO" id="GO:0015341">
    <property type="term" value="F:zinc efflux antiporter activity"/>
    <property type="evidence" value="ECO:0007669"/>
    <property type="project" value="TreeGrafter"/>
</dbReference>
<dbReference type="GO" id="GO:0006882">
    <property type="term" value="P:intracellular zinc ion homeostasis"/>
    <property type="evidence" value="ECO:0007669"/>
    <property type="project" value="TreeGrafter"/>
</dbReference>
<dbReference type="FunFam" id="1.20.1510.10:FF:000001">
    <property type="entry name" value="Ferrous-iron efflux pump FieF"/>
    <property type="match status" value="1"/>
</dbReference>
<dbReference type="FunFam" id="3.30.70.1350:FF:000002">
    <property type="entry name" value="Ferrous-iron efflux pump FieF"/>
    <property type="match status" value="1"/>
</dbReference>
<dbReference type="Gene3D" id="1.20.1510.10">
    <property type="entry name" value="Cation efflux protein transmembrane domain"/>
    <property type="match status" value="1"/>
</dbReference>
<dbReference type="Gene3D" id="3.30.70.1350">
    <property type="entry name" value="Cation efflux protein, cytoplasmic domain"/>
    <property type="match status" value="1"/>
</dbReference>
<dbReference type="HAMAP" id="MF_01425">
    <property type="entry name" value="Cation_efflux_FieF"/>
    <property type="match status" value="1"/>
</dbReference>
<dbReference type="InterPro" id="IPR002524">
    <property type="entry name" value="Cation_efflux"/>
</dbReference>
<dbReference type="InterPro" id="IPR027470">
    <property type="entry name" value="Cation_efflux_CTD"/>
</dbReference>
<dbReference type="InterPro" id="IPR036837">
    <property type="entry name" value="Cation_efflux_CTD_sf"/>
</dbReference>
<dbReference type="InterPro" id="IPR023783">
    <property type="entry name" value="Cation_efflux_FieF"/>
</dbReference>
<dbReference type="InterPro" id="IPR027469">
    <property type="entry name" value="Cation_efflux_TMD_sf"/>
</dbReference>
<dbReference type="InterPro" id="IPR050291">
    <property type="entry name" value="CDF_Transporter"/>
</dbReference>
<dbReference type="NCBIfam" id="TIGR01297">
    <property type="entry name" value="CDF"/>
    <property type="match status" value="1"/>
</dbReference>
<dbReference type="NCBIfam" id="NF007064">
    <property type="entry name" value="PRK09509.1"/>
    <property type="match status" value="1"/>
</dbReference>
<dbReference type="PANTHER" id="PTHR43840:SF41">
    <property type="entry name" value="CATION-EFFLUX PUMP FIEF"/>
    <property type="match status" value="1"/>
</dbReference>
<dbReference type="PANTHER" id="PTHR43840">
    <property type="entry name" value="MITOCHONDRIAL METAL TRANSPORTER 1-RELATED"/>
    <property type="match status" value="1"/>
</dbReference>
<dbReference type="Pfam" id="PF01545">
    <property type="entry name" value="Cation_efflux"/>
    <property type="match status" value="1"/>
</dbReference>
<dbReference type="Pfam" id="PF16916">
    <property type="entry name" value="ZT_dimer"/>
    <property type="match status" value="1"/>
</dbReference>
<dbReference type="SUPFAM" id="SSF160240">
    <property type="entry name" value="Cation efflux protein cytoplasmic domain-like"/>
    <property type="match status" value="1"/>
</dbReference>
<dbReference type="SUPFAM" id="SSF161111">
    <property type="entry name" value="Cation efflux protein transmembrane domain-like"/>
    <property type="match status" value="1"/>
</dbReference>
<evidence type="ECO:0000255" key="1">
    <source>
        <dbReference type="HAMAP-Rule" id="MF_01425"/>
    </source>
</evidence>
<accession>B2TVQ7</accession>
<sequence length="300" mass="32939">MNQSYGRLVSRAAIAATAMASLLLLIKIFAWWYTGSVSILAALVDSLVDIGASLTNLLVVRYSLQPADDNHSFGHGKAESLAALAQSMFISGSALFLFLTGIQHLISPTPMIDPGVGVIVTIVALICTIILVSFQRWVVRRTQSQAVRADMLHYQSDVMMNGAILLALGLSWYGWHRADALFALGIGIYILYSALRMGYEAVQSLLDRALPDEERQEIIDIVTSWPGVSGAHDLRTRQSGPTRFIQIHLEMEDSLPLVQAHMVADQVEQAILRRFPGSDVIIHQDPCSVVPREGKRSMLS</sequence>
<organism>
    <name type="scientific">Shigella boydii serotype 18 (strain CDC 3083-94 / BS512)</name>
    <dbReference type="NCBI Taxonomy" id="344609"/>
    <lineage>
        <taxon>Bacteria</taxon>
        <taxon>Pseudomonadati</taxon>
        <taxon>Pseudomonadota</taxon>
        <taxon>Gammaproteobacteria</taxon>
        <taxon>Enterobacterales</taxon>
        <taxon>Enterobacteriaceae</taxon>
        <taxon>Shigella</taxon>
    </lineage>
</organism>
<proteinExistence type="inferred from homology"/>
<gene>
    <name evidence="1" type="primary">fieF</name>
    <name type="ordered locus">SbBS512_E4394</name>
</gene>
<reference key="1">
    <citation type="submission" date="2008-05" db="EMBL/GenBank/DDBJ databases">
        <title>Complete sequence of Shigella boydii serotype 18 strain BS512.</title>
        <authorList>
            <person name="Rasko D.A."/>
            <person name="Rosovitz M."/>
            <person name="Maurelli A.T."/>
            <person name="Myers G."/>
            <person name="Seshadri R."/>
            <person name="Cer R."/>
            <person name="Jiang L."/>
            <person name="Ravel J."/>
            <person name="Sebastian Y."/>
        </authorList>
    </citation>
    <scope>NUCLEOTIDE SEQUENCE [LARGE SCALE GENOMIC DNA]</scope>
    <source>
        <strain>CDC 3083-94 / BS512</strain>
    </source>
</reference>